<feature type="chain" id="PRO_0000088175" description="Tyrosine-protein kinase TXK">
    <location>
        <begin position="1"/>
        <end position="527"/>
    </location>
</feature>
<feature type="domain" description="SH3" evidence="6">
    <location>
        <begin position="82"/>
        <end position="142"/>
    </location>
</feature>
<feature type="domain" description="SH2" evidence="5">
    <location>
        <begin position="150"/>
        <end position="246"/>
    </location>
</feature>
<feature type="domain" description="Protein kinase" evidence="4">
    <location>
        <begin position="271"/>
        <end position="527"/>
    </location>
</feature>
<feature type="region of interest" description="Disordered" evidence="8">
    <location>
        <begin position="35"/>
        <end position="79"/>
    </location>
</feature>
<feature type="short sequence motif" description="Nuclear localization signal" evidence="3">
    <location>
        <begin position="68"/>
        <end position="73"/>
    </location>
</feature>
<feature type="compositionally biased region" description="Polar residues" evidence="8">
    <location>
        <begin position="51"/>
        <end position="64"/>
    </location>
</feature>
<feature type="active site" description="Proton acceptor" evidence="4 7">
    <location>
        <position position="390"/>
    </location>
</feature>
<feature type="binding site" evidence="4">
    <location>
        <begin position="277"/>
        <end position="285"/>
    </location>
    <ligand>
        <name>ATP</name>
        <dbReference type="ChEBI" id="CHEBI:30616"/>
    </ligand>
</feature>
<feature type="binding site" evidence="4">
    <location>
        <position position="299"/>
    </location>
    <ligand>
        <name>ATP</name>
        <dbReference type="ChEBI" id="CHEBI:30616"/>
    </ligand>
</feature>
<feature type="modified residue" description="Phosphotyrosine; by autocatalysis" evidence="12">
    <location>
        <position position="91"/>
    </location>
</feature>
<feature type="modified residue" description="Phosphotyrosine; by FYN and autocatalysis" evidence="12">
    <location>
        <position position="420"/>
    </location>
</feature>
<feature type="sequence variant" id="VAR_028368" description="In dbSNP:rs7658300." evidence="14 15">
    <original>R</original>
    <variation>H</variation>
    <location>
        <position position="45"/>
    </location>
</feature>
<feature type="sequence variant" id="VAR_041869" description="In dbSNP:rs41265727." evidence="14">
    <original>R</original>
    <variation>C</variation>
    <location>
        <position position="63"/>
    </location>
</feature>
<feature type="sequence variant" id="VAR_028369" description="In dbSNP:rs11724347." evidence="14">
    <original>R</original>
    <variation>Q</variation>
    <location>
        <position position="336"/>
    </location>
</feature>
<feature type="mutagenesis site" description="Reduces expression levels if IFN-gamma." evidence="12">
    <original>Y</original>
    <variation>A</variation>
    <location>
        <position position="91"/>
    </location>
</feature>
<feature type="mutagenesis site" description="Impairs kinase activity." evidence="16">
    <original>K</original>
    <variation>A</variation>
    <location>
        <position position="299"/>
    </location>
</feature>
<feature type="strand" evidence="18">
    <location>
        <begin position="148"/>
        <end position="151"/>
    </location>
</feature>
<feature type="helix" evidence="18">
    <location>
        <begin position="157"/>
        <end position="167"/>
    </location>
</feature>
<feature type="strand" evidence="18">
    <location>
        <begin position="175"/>
        <end position="178"/>
    </location>
</feature>
<feature type="strand" evidence="18">
    <location>
        <begin position="181"/>
        <end position="189"/>
    </location>
</feature>
<feature type="strand" evidence="18">
    <location>
        <begin position="193"/>
        <end position="197"/>
    </location>
</feature>
<feature type="strand" evidence="18">
    <location>
        <begin position="200"/>
        <end position="207"/>
    </location>
</feature>
<feature type="strand" evidence="18">
    <location>
        <begin position="213"/>
        <end position="218"/>
    </location>
</feature>
<feature type="helix" evidence="18">
    <location>
        <begin position="224"/>
        <end position="231"/>
    </location>
</feature>
<feature type="strand" evidence="18">
    <location>
        <begin position="237"/>
        <end position="239"/>
    </location>
</feature>
<reference key="1">
    <citation type="journal article" date="1994" name="Hum. Mol. Genet.">
        <title>TXK, a novel human tyrosine kinase expressed in T cells shares sequence identity with Tec family kinases and maps to 4p12.</title>
        <authorList>
            <person name="Haire R.N."/>
            <person name="Ohta Y."/>
            <person name="Lewis J.E."/>
            <person name="Fu S.M."/>
            <person name="Kroisel P.M."/>
            <person name="Litman G.W."/>
        </authorList>
    </citation>
    <scope>NUCLEOTIDE SEQUENCE [MRNA]</scope>
    <scope>VARIANT HIS-45</scope>
    <scope>TISSUE SPECIFICITY</scope>
    <source>
        <tissue>Blood</tissue>
    </source>
</reference>
<reference key="2">
    <citation type="journal article" date="1996" name="Oncogene">
        <title>Human Txk: genomic organization, structure and contiguous physical linkage with the Tec gene.</title>
        <authorList>
            <person name="Ohta Y."/>
            <person name="Haire R.N."/>
            <person name="Amemiya C.T."/>
            <person name="Litman R.T."/>
            <person name="Trager T."/>
            <person name="Riess O."/>
            <person name="Litman G.W."/>
        </authorList>
    </citation>
    <scope>NUCLEOTIDE SEQUENCE [GENOMIC DNA]</scope>
    <source>
        <tissue>Blood</tissue>
    </source>
</reference>
<reference key="3">
    <citation type="journal article" date="1998" name="Biochem. Biophys. Res. Commun.">
        <title>Resting lymphocyte kinase (Rlk/Txk) phosphorylates the YVKM motif and regulates PI 3-kinase binding to T-cell antigen CTLA-4.</title>
        <authorList>
            <person name="Schneider H."/>
            <person name="Schwartzberg P.L."/>
            <person name="Rudd C.E."/>
        </authorList>
    </citation>
    <scope>FUNCTION IN PHOSPHORYLATION OF CTLA4</scope>
    <scope>MUTAGENESIS OF LYS-299</scope>
</reference>
<reference key="4">
    <citation type="journal article" date="1999" name="J. Exp. Med.">
        <title>Txk, a nonreceptor tyrosine kinase of the Tec family, is expressed in T helper type 1 cells and regulates interferon gamma production in human T lymphocytes.</title>
        <authorList>
            <person name="Kashiwakura J."/>
            <person name="Suzuki N."/>
            <person name="Nagafuchi H."/>
            <person name="Takeno M."/>
            <person name="Takeba Y."/>
            <person name="Shimoyama Y."/>
            <person name="Sakane T."/>
        </authorList>
    </citation>
    <scope>TISSUE SPECIFICITY</scope>
    <scope>FUNCTION</scope>
</reference>
<reference key="5">
    <citation type="journal article" date="2001" name="Mol. Cell. Biol.">
        <title>Membrane raft-dependent regulation of phospholipase Cgamma-1 activation in T lymphocytes.</title>
        <authorList>
            <person name="Veri M.C."/>
            <person name="DeBell K.E."/>
            <person name="Seminario M.C."/>
            <person name="DiBaldassarre A."/>
            <person name="Reischl I."/>
            <person name="Rawat R."/>
            <person name="Graham L."/>
            <person name="Noviello C."/>
            <person name="Rellahan B.L."/>
            <person name="Miscia S."/>
            <person name="Wange R.L."/>
            <person name="Bonvini E."/>
        </authorList>
    </citation>
    <scope>FUNCTION IN PHOSPHORYLATION OF PLCG1</scope>
</reference>
<reference key="6">
    <citation type="journal article" date="2002" name="Biol. Pharm. Bull.">
        <title>Evidence of autophosphorylation in Txk: Y91 is an autophosphorylation site.</title>
        <authorList>
            <person name="Kashiwakura J."/>
            <person name="Suzuki N."/>
            <person name="Takeno M."/>
            <person name="Itoh S."/>
            <person name="Oku T."/>
            <person name="Sakane T."/>
            <person name="Nakajin S."/>
            <person name="Toyoshima S."/>
        </authorList>
    </citation>
    <scope>AUTOPHOSPHORYLATION</scope>
    <scope>PHOSPHORYLATION AT TYR-91 AND TYR-420</scope>
    <scope>ACTIVITY REGULATION</scope>
    <scope>MUTAGENESIS OF TYR-91</scope>
</reference>
<reference key="7">
    <citation type="journal article" date="2002" name="J. Immunol.">
        <title>Txk, a member of nonreceptor tyrosine kinase of Tec family, acts as a Th1 cell-specific transcription factor and regulates IFN-gamma gene transcription.</title>
        <authorList>
            <person name="Takeba Y."/>
            <person name="Nagafuchi H."/>
            <person name="Takeno M."/>
            <person name="Kashiwakura J."/>
            <person name="Suzuki N."/>
        </authorList>
    </citation>
    <scope>FUNCTION</scope>
</reference>
<reference key="8">
    <citation type="journal article" date="2007" name="Clin. Exp. Immunol.">
        <title>Txk, a member of the non-receptor tyrosine kinase of the Tec family, forms a complex with poly(ADP-ribose) polymerase 1 and elongation factor 1alpha and regulates interferon-gamma gene transcription in Th1 cells.</title>
        <authorList>
            <person name="Maruyama T."/>
            <person name="Nara K."/>
            <person name="Yoshikawa H."/>
            <person name="Suzuki N."/>
        </authorList>
    </citation>
    <scope>FUNCTION</scope>
    <scope>CATALYTIC ACTIVITY</scope>
    <scope>INTERACTION WITH PARP1 AND EEF1A1</scope>
    <scope>SUBCELLULAR LOCATION</scope>
</reference>
<reference key="9">
    <citation type="journal article" date="2009" name="Immunol. Rev.">
        <title>Tec kinases regulate T-lymphocyte development and function: new insights into the roles of Itk and Rlk/Txk.</title>
        <authorList>
            <person name="Readinger J.A."/>
            <person name="Mueller K.L."/>
            <person name="Venegas A.M."/>
            <person name="Horai R."/>
            <person name="Schwartzberg P.L."/>
        </authorList>
    </citation>
    <scope>REVIEW ON FUNCTION</scope>
</reference>
<reference key="10">
    <citation type="submission" date="2006-10" db="PDB data bank">
        <title>Solution structure of the SH2 domain of human tyrosine-protein kinase TXK.</title>
        <authorList>
            <consortium name="RIKEN structural genomics initiative (RSGI)"/>
        </authorList>
    </citation>
    <scope>STRUCTURE BY NMR OF 140-251</scope>
</reference>
<reference key="11">
    <citation type="journal article" date="2007" name="Nature">
        <title>Patterns of somatic mutation in human cancer genomes.</title>
        <authorList>
            <person name="Greenman C."/>
            <person name="Stephens P."/>
            <person name="Smith R."/>
            <person name="Dalgliesh G.L."/>
            <person name="Hunter C."/>
            <person name="Bignell G."/>
            <person name="Davies H."/>
            <person name="Teague J."/>
            <person name="Butler A."/>
            <person name="Stevens C."/>
            <person name="Edkins S."/>
            <person name="O'Meara S."/>
            <person name="Vastrik I."/>
            <person name="Schmidt E.E."/>
            <person name="Avis T."/>
            <person name="Barthorpe S."/>
            <person name="Bhamra G."/>
            <person name="Buck G."/>
            <person name="Choudhury B."/>
            <person name="Clements J."/>
            <person name="Cole J."/>
            <person name="Dicks E."/>
            <person name="Forbes S."/>
            <person name="Gray K."/>
            <person name="Halliday K."/>
            <person name="Harrison R."/>
            <person name="Hills K."/>
            <person name="Hinton J."/>
            <person name="Jenkinson A."/>
            <person name="Jones D."/>
            <person name="Menzies A."/>
            <person name="Mironenko T."/>
            <person name="Perry J."/>
            <person name="Raine K."/>
            <person name="Richardson D."/>
            <person name="Shepherd R."/>
            <person name="Small A."/>
            <person name="Tofts C."/>
            <person name="Varian J."/>
            <person name="Webb T."/>
            <person name="West S."/>
            <person name="Widaa S."/>
            <person name="Yates A."/>
            <person name="Cahill D.P."/>
            <person name="Louis D.N."/>
            <person name="Goldstraw P."/>
            <person name="Nicholson A.G."/>
            <person name="Brasseur F."/>
            <person name="Looijenga L."/>
            <person name="Weber B.L."/>
            <person name="Chiew Y.-E."/>
            <person name="DeFazio A."/>
            <person name="Greaves M.F."/>
            <person name="Green A.R."/>
            <person name="Campbell P."/>
            <person name="Birney E."/>
            <person name="Easton D.F."/>
            <person name="Chenevix-Trench G."/>
            <person name="Tan M.-H."/>
            <person name="Khoo S.K."/>
            <person name="Teh B.T."/>
            <person name="Yuen S.T."/>
            <person name="Leung S.Y."/>
            <person name="Wooster R."/>
            <person name="Futreal P.A."/>
            <person name="Stratton M.R."/>
        </authorList>
    </citation>
    <scope>VARIANTS [LARGE SCALE ANALYSIS] HIS-45; CYS-63 AND GLN-336</scope>
</reference>
<dbReference type="EC" id="2.7.10.2" evidence="13"/>
<dbReference type="EMBL" id="L27071">
    <property type="protein sequence ID" value="AAA74557.1"/>
    <property type="molecule type" value="mRNA"/>
</dbReference>
<dbReference type="EMBL" id="U34379">
    <property type="protein sequence ID" value="AAB60412.1"/>
    <property type="molecule type" value="Genomic_DNA"/>
</dbReference>
<dbReference type="EMBL" id="U34367">
    <property type="protein sequence ID" value="AAB60412.1"/>
    <property type="status" value="JOINED"/>
    <property type="molecule type" value="Genomic_DNA"/>
</dbReference>
<dbReference type="EMBL" id="U34368">
    <property type="protein sequence ID" value="AAB60412.1"/>
    <property type="status" value="JOINED"/>
    <property type="molecule type" value="Genomic_DNA"/>
</dbReference>
<dbReference type="EMBL" id="U34369">
    <property type="protein sequence ID" value="AAB60412.1"/>
    <property type="status" value="JOINED"/>
    <property type="molecule type" value="Genomic_DNA"/>
</dbReference>
<dbReference type="EMBL" id="U34370">
    <property type="protein sequence ID" value="AAB60412.1"/>
    <property type="status" value="JOINED"/>
    <property type="molecule type" value="Genomic_DNA"/>
</dbReference>
<dbReference type="EMBL" id="U34371">
    <property type="protein sequence ID" value="AAB60412.1"/>
    <property type="status" value="JOINED"/>
    <property type="molecule type" value="Genomic_DNA"/>
</dbReference>
<dbReference type="EMBL" id="U34372">
    <property type="protein sequence ID" value="AAB60412.1"/>
    <property type="status" value="JOINED"/>
    <property type="molecule type" value="Genomic_DNA"/>
</dbReference>
<dbReference type="EMBL" id="U34373">
    <property type="protein sequence ID" value="AAB60412.1"/>
    <property type="status" value="JOINED"/>
    <property type="molecule type" value="Genomic_DNA"/>
</dbReference>
<dbReference type="EMBL" id="U34374">
    <property type="protein sequence ID" value="AAB60412.1"/>
    <property type="status" value="JOINED"/>
    <property type="molecule type" value="Genomic_DNA"/>
</dbReference>
<dbReference type="EMBL" id="U34375">
    <property type="protein sequence ID" value="AAB60412.1"/>
    <property type="status" value="JOINED"/>
    <property type="molecule type" value="Genomic_DNA"/>
</dbReference>
<dbReference type="EMBL" id="U34376">
    <property type="protein sequence ID" value="AAB60412.1"/>
    <property type="status" value="JOINED"/>
    <property type="molecule type" value="Genomic_DNA"/>
</dbReference>
<dbReference type="EMBL" id="U34377">
    <property type="protein sequence ID" value="AAB60412.1"/>
    <property type="status" value="JOINED"/>
    <property type="molecule type" value="Genomic_DNA"/>
</dbReference>
<dbReference type="EMBL" id="U34378">
    <property type="protein sequence ID" value="AAB60412.1"/>
    <property type="status" value="JOINED"/>
    <property type="molecule type" value="Genomic_DNA"/>
</dbReference>
<dbReference type="CCDS" id="CCDS3480.1"/>
<dbReference type="PIR" id="I84483">
    <property type="entry name" value="I84483"/>
</dbReference>
<dbReference type="RefSeq" id="NP_003319.2">
    <property type="nucleotide sequence ID" value="NM_003328.3"/>
</dbReference>
<dbReference type="PDB" id="2DM0">
    <property type="method" value="NMR"/>
    <property type="chains" value="A=140-251"/>
</dbReference>
<dbReference type="PDBsum" id="2DM0"/>
<dbReference type="SMR" id="P42681"/>
<dbReference type="BioGRID" id="113145">
    <property type="interactions" value="39"/>
</dbReference>
<dbReference type="FunCoup" id="P42681">
    <property type="interactions" value="1388"/>
</dbReference>
<dbReference type="IntAct" id="P42681">
    <property type="interactions" value="88"/>
</dbReference>
<dbReference type="MINT" id="P42681"/>
<dbReference type="STRING" id="9606.ENSP00000264316"/>
<dbReference type="BindingDB" id="P42681"/>
<dbReference type="ChEMBL" id="CHEMBL4367"/>
<dbReference type="DrugBank" id="DB12010">
    <property type="generic name" value="Fostamatinib"/>
</dbReference>
<dbReference type="DrugBank" id="DB14924">
    <property type="generic name" value="Ritlecitinib"/>
</dbReference>
<dbReference type="DrugBank" id="DB15035">
    <property type="generic name" value="Zanubrutinib"/>
</dbReference>
<dbReference type="DrugCentral" id="P42681"/>
<dbReference type="GuidetoPHARMACOLOGY" id="2268"/>
<dbReference type="iPTMnet" id="P42681"/>
<dbReference type="PhosphoSitePlus" id="P42681"/>
<dbReference type="BioMuta" id="TXK"/>
<dbReference type="DMDM" id="116242835"/>
<dbReference type="jPOST" id="P42681"/>
<dbReference type="MassIVE" id="P42681"/>
<dbReference type="PaxDb" id="9606-ENSP00000264316"/>
<dbReference type="PeptideAtlas" id="P42681"/>
<dbReference type="ProteomicsDB" id="55527"/>
<dbReference type="Antibodypedia" id="23802">
    <property type="antibodies" value="273 antibodies from 33 providers"/>
</dbReference>
<dbReference type="DNASU" id="7294"/>
<dbReference type="Ensembl" id="ENST00000264316.9">
    <property type="protein sequence ID" value="ENSP00000264316.4"/>
    <property type="gene ID" value="ENSG00000074966.12"/>
</dbReference>
<dbReference type="GeneID" id="7294"/>
<dbReference type="KEGG" id="hsa:7294"/>
<dbReference type="MANE-Select" id="ENST00000264316.9">
    <property type="protein sequence ID" value="ENSP00000264316.4"/>
    <property type="RefSeq nucleotide sequence ID" value="NM_003328.3"/>
    <property type="RefSeq protein sequence ID" value="NP_003319.2"/>
</dbReference>
<dbReference type="UCSC" id="uc003gxx.4">
    <property type="organism name" value="human"/>
</dbReference>
<dbReference type="AGR" id="HGNC:12434"/>
<dbReference type="CTD" id="7294"/>
<dbReference type="DisGeNET" id="7294"/>
<dbReference type="GeneCards" id="TXK"/>
<dbReference type="HGNC" id="HGNC:12434">
    <property type="gene designation" value="TXK"/>
</dbReference>
<dbReference type="HPA" id="ENSG00000074966">
    <property type="expression patterns" value="Tissue enhanced (epididymis, lymphoid tissue)"/>
</dbReference>
<dbReference type="MIM" id="600058">
    <property type="type" value="gene"/>
</dbReference>
<dbReference type="neXtProt" id="NX_P42681"/>
<dbReference type="OpenTargets" id="ENSG00000074966"/>
<dbReference type="PharmGKB" id="PA37090"/>
<dbReference type="VEuPathDB" id="HostDB:ENSG00000074966"/>
<dbReference type="eggNOG" id="KOG0197">
    <property type="taxonomic scope" value="Eukaryota"/>
</dbReference>
<dbReference type="GeneTree" id="ENSGT00940000160857"/>
<dbReference type="HOGENOM" id="CLU_000288_7_2_1"/>
<dbReference type="InParanoid" id="P42681"/>
<dbReference type="OMA" id="THWWKAR"/>
<dbReference type="OrthoDB" id="4062651at2759"/>
<dbReference type="PAN-GO" id="P42681">
    <property type="GO annotations" value="6 GO annotations based on evolutionary models"/>
</dbReference>
<dbReference type="PhylomeDB" id="P42681"/>
<dbReference type="TreeFam" id="TF351634"/>
<dbReference type="BRENDA" id="2.7.10.2">
    <property type="organism ID" value="2681"/>
</dbReference>
<dbReference type="PathwayCommons" id="P42681"/>
<dbReference type="Reactome" id="R-HSA-2871809">
    <property type="pathway name" value="FCERI mediated Ca+2 mobilization"/>
</dbReference>
<dbReference type="SignaLink" id="P42681"/>
<dbReference type="SIGNOR" id="P42681"/>
<dbReference type="BioGRID-ORCS" id="7294">
    <property type="hits" value="21 hits in 1187 CRISPR screens"/>
</dbReference>
<dbReference type="ChiTaRS" id="TXK">
    <property type="organism name" value="human"/>
</dbReference>
<dbReference type="EvolutionaryTrace" id="P42681"/>
<dbReference type="GeneWiki" id="TXK_(gene)"/>
<dbReference type="GenomeRNAi" id="7294"/>
<dbReference type="Pharos" id="P42681">
    <property type="development level" value="Tchem"/>
</dbReference>
<dbReference type="PRO" id="PR:P42681"/>
<dbReference type="Proteomes" id="UP000005640">
    <property type="component" value="Chromosome 4"/>
</dbReference>
<dbReference type="RNAct" id="P42681">
    <property type="molecule type" value="protein"/>
</dbReference>
<dbReference type="Bgee" id="ENSG00000074966">
    <property type="expression patterns" value="Expressed in granulocyte and 109 other cell types or tissues"/>
</dbReference>
<dbReference type="ExpressionAtlas" id="P42681">
    <property type="expression patterns" value="baseline and differential"/>
</dbReference>
<dbReference type="GO" id="GO:0005737">
    <property type="term" value="C:cytoplasm"/>
    <property type="evidence" value="ECO:0000314"/>
    <property type="project" value="UniProtKB"/>
</dbReference>
<dbReference type="GO" id="GO:0005829">
    <property type="term" value="C:cytosol"/>
    <property type="evidence" value="ECO:0000314"/>
    <property type="project" value="HPA"/>
</dbReference>
<dbReference type="GO" id="GO:0005730">
    <property type="term" value="C:nucleolus"/>
    <property type="evidence" value="ECO:0000314"/>
    <property type="project" value="HPA"/>
</dbReference>
<dbReference type="GO" id="GO:0005654">
    <property type="term" value="C:nucleoplasm"/>
    <property type="evidence" value="ECO:0000314"/>
    <property type="project" value="HPA"/>
</dbReference>
<dbReference type="GO" id="GO:0005634">
    <property type="term" value="C:nucleus"/>
    <property type="evidence" value="ECO:0000314"/>
    <property type="project" value="UniProtKB"/>
</dbReference>
<dbReference type="GO" id="GO:0005886">
    <property type="term" value="C:plasma membrane"/>
    <property type="evidence" value="ECO:0000314"/>
    <property type="project" value="HPA"/>
</dbReference>
<dbReference type="GO" id="GO:0005524">
    <property type="term" value="F:ATP binding"/>
    <property type="evidence" value="ECO:0007669"/>
    <property type="project" value="UniProtKB-KW"/>
</dbReference>
<dbReference type="GO" id="GO:0004715">
    <property type="term" value="F:non-membrane spanning protein tyrosine kinase activity"/>
    <property type="evidence" value="ECO:0000318"/>
    <property type="project" value="GO_Central"/>
</dbReference>
<dbReference type="GO" id="GO:0002250">
    <property type="term" value="P:adaptive immune response"/>
    <property type="evidence" value="ECO:0000250"/>
    <property type="project" value="UniProtKB"/>
</dbReference>
<dbReference type="GO" id="GO:0001819">
    <property type="term" value="P:positive regulation of cytokine production"/>
    <property type="evidence" value="ECO:0000250"/>
    <property type="project" value="UniProtKB"/>
</dbReference>
<dbReference type="GO" id="GO:0045944">
    <property type="term" value="P:positive regulation of transcription by RNA polymerase II"/>
    <property type="evidence" value="ECO:0000314"/>
    <property type="project" value="NTNU_SB"/>
</dbReference>
<dbReference type="GO" id="GO:0032729">
    <property type="term" value="P:positive regulation of type II interferon production"/>
    <property type="evidence" value="ECO:0000314"/>
    <property type="project" value="UniProtKB"/>
</dbReference>
<dbReference type="GO" id="GO:0060335">
    <property type="term" value="P:positive regulation of type II interferon-mediated signaling pathway"/>
    <property type="evidence" value="ECO:0000314"/>
    <property type="project" value="UniProtKB"/>
</dbReference>
<dbReference type="GO" id="GO:0046777">
    <property type="term" value="P:protein autophosphorylation"/>
    <property type="evidence" value="ECO:0000314"/>
    <property type="project" value="UniProtKB"/>
</dbReference>
<dbReference type="GO" id="GO:0006468">
    <property type="term" value="P:protein phosphorylation"/>
    <property type="evidence" value="ECO:0000314"/>
    <property type="project" value="UniProtKB"/>
</dbReference>
<dbReference type="GO" id="GO:0010468">
    <property type="term" value="P:regulation of gene expression"/>
    <property type="evidence" value="ECO:0000314"/>
    <property type="project" value="GO_Central"/>
</dbReference>
<dbReference type="GO" id="GO:0050852">
    <property type="term" value="P:T cell receptor signaling pathway"/>
    <property type="evidence" value="ECO:0000250"/>
    <property type="project" value="UniProtKB"/>
</dbReference>
<dbReference type="CDD" id="cd05059">
    <property type="entry name" value="PTKc_Tec_like"/>
    <property type="match status" value="1"/>
</dbReference>
<dbReference type="CDD" id="cd10398">
    <property type="entry name" value="SH2_Tec_Txk"/>
    <property type="match status" value="1"/>
</dbReference>
<dbReference type="CDD" id="cd11907">
    <property type="entry name" value="SH3_TXK"/>
    <property type="match status" value="1"/>
</dbReference>
<dbReference type="FunFam" id="1.10.510.10:FF:000052">
    <property type="entry name" value="Tyrosine-protein kinase"/>
    <property type="match status" value="1"/>
</dbReference>
<dbReference type="FunFam" id="2.30.30.40:FF:000197">
    <property type="entry name" value="Tyrosine-protein kinase"/>
    <property type="match status" value="1"/>
</dbReference>
<dbReference type="FunFam" id="3.30.200.20:FF:000053">
    <property type="entry name" value="Tyrosine-protein kinase"/>
    <property type="match status" value="1"/>
</dbReference>
<dbReference type="FunFam" id="3.30.505.10:FF:000045">
    <property type="entry name" value="Tyrosine-protein kinase"/>
    <property type="match status" value="1"/>
</dbReference>
<dbReference type="Gene3D" id="3.30.505.10">
    <property type="entry name" value="SH2 domain"/>
    <property type="match status" value="1"/>
</dbReference>
<dbReference type="Gene3D" id="2.30.30.40">
    <property type="entry name" value="SH3 Domains"/>
    <property type="match status" value="1"/>
</dbReference>
<dbReference type="Gene3D" id="1.10.510.10">
    <property type="entry name" value="Transferase(Phosphotransferase) domain 1"/>
    <property type="match status" value="1"/>
</dbReference>
<dbReference type="InterPro" id="IPR011009">
    <property type="entry name" value="Kinase-like_dom_sf"/>
</dbReference>
<dbReference type="InterPro" id="IPR050198">
    <property type="entry name" value="Non-receptor_tyrosine_kinases"/>
</dbReference>
<dbReference type="InterPro" id="IPR000719">
    <property type="entry name" value="Prot_kinase_dom"/>
</dbReference>
<dbReference type="InterPro" id="IPR017441">
    <property type="entry name" value="Protein_kinase_ATP_BS"/>
</dbReference>
<dbReference type="InterPro" id="IPR001245">
    <property type="entry name" value="Ser-Thr/Tyr_kinase_cat_dom"/>
</dbReference>
<dbReference type="InterPro" id="IPR000980">
    <property type="entry name" value="SH2"/>
</dbReference>
<dbReference type="InterPro" id="IPR036860">
    <property type="entry name" value="SH2_dom_sf"/>
</dbReference>
<dbReference type="InterPro" id="IPR036028">
    <property type="entry name" value="SH3-like_dom_sf"/>
</dbReference>
<dbReference type="InterPro" id="IPR001452">
    <property type="entry name" value="SH3_domain"/>
</dbReference>
<dbReference type="InterPro" id="IPR035870">
    <property type="entry name" value="Txk_SH2"/>
</dbReference>
<dbReference type="InterPro" id="IPR035579">
    <property type="entry name" value="TXK_SH3"/>
</dbReference>
<dbReference type="InterPro" id="IPR008266">
    <property type="entry name" value="Tyr_kinase_AS"/>
</dbReference>
<dbReference type="InterPro" id="IPR020635">
    <property type="entry name" value="Tyr_kinase_cat_dom"/>
</dbReference>
<dbReference type="PANTHER" id="PTHR24418">
    <property type="entry name" value="TYROSINE-PROTEIN KINASE"/>
    <property type="match status" value="1"/>
</dbReference>
<dbReference type="Pfam" id="PF07714">
    <property type="entry name" value="PK_Tyr_Ser-Thr"/>
    <property type="match status" value="1"/>
</dbReference>
<dbReference type="Pfam" id="PF00017">
    <property type="entry name" value="SH2"/>
    <property type="match status" value="1"/>
</dbReference>
<dbReference type="Pfam" id="PF00018">
    <property type="entry name" value="SH3_1"/>
    <property type="match status" value="1"/>
</dbReference>
<dbReference type="PRINTS" id="PR00401">
    <property type="entry name" value="SH2DOMAIN"/>
</dbReference>
<dbReference type="PRINTS" id="PR00109">
    <property type="entry name" value="TYRKINASE"/>
</dbReference>
<dbReference type="SMART" id="SM00252">
    <property type="entry name" value="SH2"/>
    <property type="match status" value="1"/>
</dbReference>
<dbReference type="SMART" id="SM00326">
    <property type="entry name" value="SH3"/>
    <property type="match status" value="1"/>
</dbReference>
<dbReference type="SMART" id="SM00219">
    <property type="entry name" value="TyrKc"/>
    <property type="match status" value="1"/>
</dbReference>
<dbReference type="SUPFAM" id="SSF56112">
    <property type="entry name" value="Protein kinase-like (PK-like)"/>
    <property type="match status" value="1"/>
</dbReference>
<dbReference type="SUPFAM" id="SSF55550">
    <property type="entry name" value="SH2 domain"/>
    <property type="match status" value="1"/>
</dbReference>
<dbReference type="SUPFAM" id="SSF50044">
    <property type="entry name" value="SH3-domain"/>
    <property type="match status" value="1"/>
</dbReference>
<dbReference type="PROSITE" id="PS00107">
    <property type="entry name" value="PROTEIN_KINASE_ATP"/>
    <property type="match status" value="1"/>
</dbReference>
<dbReference type="PROSITE" id="PS50011">
    <property type="entry name" value="PROTEIN_KINASE_DOM"/>
    <property type="match status" value="1"/>
</dbReference>
<dbReference type="PROSITE" id="PS00109">
    <property type="entry name" value="PROTEIN_KINASE_TYR"/>
    <property type="match status" value="1"/>
</dbReference>
<dbReference type="PROSITE" id="PS50001">
    <property type="entry name" value="SH2"/>
    <property type="match status" value="1"/>
</dbReference>
<dbReference type="PROSITE" id="PS50002">
    <property type="entry name" value="SH3"/>
    <property type="match status" value="1"/>
</dbReference>
<keyword id="KW-0002">3D-structure</keyword>
<keyword id="KW-1064">Adaptive immunity</keyword>
<keyword id="KW-0067">ATP-binding</keyword>
<keyword id="KW-1003">Cell membrane</keyword>
<keyword id="KW-0963">Cytoplasm</keyword>
<keyword id="KW-0391">Immunity</keyword>
<keyword id="KW-0418">Kinase</keyword>
<keyword id="KW-0449">Lipoprotein</keyword>
<keyword id="KW-0472">Membrane</keyword>
<keyword id="KW-0547">Nucleotide-binding</keyword>
<keyword id="KW-0539">Nucleus</keyword>
<keyword id="KW-0564">Palmitate</keyword>
<keyword id="KW-0597">Phosphoprotein</keyword>
<keyword id="KW-1267">Proteomics identification</keyword>
<keyword id="KW-1185">Reference proteome</keyword>
<keyword id="KW-0727">SH2 domain</keyword>
<keyword id="KW-0728">SH3 domain</keyword>
<keyword id="KW-0804">Transcription</keyword>
<keyword id="KW-0805">Transcription regulation</keyword>
<keyword id="KW-0808">Transferase</keyword>
<keyword id="KW-0829">Tyrosine-protein kinase</keyword>
<comment type="function">
    <text evidence="9 10 11 13 16">Non-receptor tyrosine kinase that plays a redundant role with ITK in regulation of the adaptive immune response. Regulates the development, function and differentiation of conventional T-cells and nonconventional NKT-cells. When antigen presenting cells (APC) activate T-cell receptor (TCR), a series of phosphorylation leads to the recruitment of TXK to the cell membrane, where it is phosphorylated at Tyr-420. Phosphorylation leads to TXK full activation. Also contributes to signaling from many receptors and participates in multiple downstream pathways, including regulation of the actin cytoskeleton. Like ITK, can phosphorylate PLCG1, leading to its localization in lipid rafts and activation, followed by subsequent cleavage of its substrates. In turn, the endoplasmic reticulum releases calcium in the cytoplasm and the nuclear activator of activated T-cells (NFAT) translocates into the nucleus to perform its transcriptional duty. Plays a role in the positive regulation of IFNG transcription in T-helper 1 cells as part of an IFNG promoter-binding complex with PARP1 and EEF1A1 (PubMed:11859127, PubMed:17177976). Within the complex, phosphorylates both PARP1 and EEF1A1 (PubMed:17177976). Also phosphorylates key sites in LCP2 leading to the up-regulation of Th1 preferred cytokine IL-2. Phosphorylates 'Tyr-201' of CTLA4 which leads to the association of PI-3 kinase with the CTLA4 receptor.</text>
</comment>
<comment type="catalytic activity">
    <reaction evidence="13">
        <text>L-tyrosyl-[protein] + ATP = O-phospho-L-tyrosyl-[protein] + ADP + H(+)</text>
        <dbReference type="Rhea" id="RHEA:10596"/>
        <dbReference type="Rhea" id="RHEA-COMP:10136"/>
        <dbReference type="Rhea" id="RHEA-COMP:20101"/>
        <dbReference type="ChEBI" id="CHEBI:15378"/>
        <dbReference type="ChEBI" id="CHEBI:30616"/>
        <dbReference type="ChEBI" id="CHEBI:46858"/>
        <dbReference type="ChEBI" id="CHEBI:61978"/>
        <dbReference type="ChEBI" id="CHEBI:456216"/>
        <dbReference type="EC" id="2.7.10.2"/>
    </reaction>
</comment>
<comment type="activity regulation">
    <text evidence="12">Activated by phosphorylation by FYN.</text>
</comment>
<comment type="subunit">
    <text evidence="2 13">Interacts with PARP1 and EEF1A1 (PubMed:17177976). Interacts with SH2D2A (By similarity). Interacts with FYN (By similarity).</text>
</comment>
<comment type="interaction">
    <interactant intactId="EBI-7877438">
        <id>P42681</id>
    </interactant>
    <interactant intactId="EBI-11524851">
        <id>Q8NA61-2</id>
        <label>CBY2</label>
    </interactant>
    <organismsDiffer>false</organismsDiffer>
    <experiments>3</experiments>
</comment>
<comment type="interaction">
    <interactant intactId="EBI-7877438">
        <id>P42681</id>
    </interactant>
    <interactant intactId="EBI-886">
        <id>P46108</id>
        <label>CRK</label>
    </interactant>
    <organismsDiffer>false</organismsDiffer>
    <experiments>3</experiments>
</comment>
<comment type="interaction">
    <interactant intactId="EBI-7877438">
        <id>P42681</id>
    </interactant>
    <interactant intactId="EBI-1046024">
        <id>O60496</id>
        <label>DOK2</label>
    </interactant>
    <organismsDiffer>false</organismsDiffer>
    <experiments>3</experiments>
</comment>
<comment type="interaction">
    <interactant intactId="EBI-7877438">
        <id>P42681</id>
    </interactant>
    <interactant intactId="EBI-746870">
        <id>Q16828</id>
        <label>DUSP6</label>
    </interactant>
    <organismsDiffer>false</organismsDiffer>
    <experiments>3</experiments>
</comment>
<comment type="interaction">
    <interactant intactId="EBI-7877438">
        <id>P42681</id>
    </interactant>
    <interactant intactId="EBI-2349927">
        <id>Q5JST6</id>
        <label>EFHC2</label>
    </interactant>
    <organismsDiffer>false</organismsDiffer>
    <experiments>3</experiments>
</comment>
<comment type="interaction">
    <interactant intactId="EBI-7877438">
        <id>P42681</id>
    </interactant>
    <interactant intactId="EBI-12353035">
        <id>Q13322-4</id>
        <label>GRB10</label>
    </interactant>
    <organismsDiffer>false</organismsDiffer>
    <experiments>3</experiments>
</comment>
<comment type="interaction">
    <interactant intactId="EBI-7877438">
        <id>P42681</id>
    </interactant>
    <interactant intactId="EBI-401755">
        <id>P62993</id>
        <label>GRB2</label>
    </interactant>
    <organismsDiffer>false</organismsDiffer>
    <experiments>3</experiments>
</comment>
<comment type="interaction">
    <interactant intactId="EBI-7877438">
        <id>P42681</id>
    </interactant>
    <interactant intactId="EBI-11522367">
        <id>Q13422-7</id>
        <label>IKZF1</label>
    </interactant>
    <organismsDiffer>false</organismsDiffer>
    <experiments>3</experiments>
</comment>
<comment type="interaction">
    <interactant intactId="EBI-7877438">
        <id>P42681</id>
    </interactant>
    <interactant intactId="EBI-1640423">
        <id>Q9H2S9</id>
        <label>IKZF4</label>
    </interactant>
    <organismsDiffer>false</organismsDiffer>
    <experiments>3</experiments>
</comment>
<comment type="interaction">
    <interactant intactId="EBI-7877438">
        <id>P42681</id>
    </interactant>
    <interactant intactId="EBI-17181882">
        <id>O75564-2</id>
        <label>JRK</label>
    </interactant>
    <organismsDiffer>false</organismsDiffer>
    <experiments>3</experiments>
</comment>
<comment type="interaction">
    <interactant intactId="EBI-7877438">
        <id>P42681</id>
    </interactant>
    <interactant intactId="EBI-1379503">
        <id>P10721</id>
        <label>KIT</label>
    </interactant>
    <organismsDiffer>false</organismsDiffer>
    <experiments>3</experiments>
</comment>
<comment type="interaction">
    <interactant intactId="EBI-7877438">
        <id>P42681</id>
    </interactant>
    <interactant intactId="EBI-713635">
        <id>O43639</id>
        <label>NCK2</label>
    </interactant>
    <organismsDiffer>false</organismsDiffer>
    <experiments>3</experiments>
</comment>
<comment type="interaction">
    <interactant intactId="EBI-7877438">
        <id>P42681</id>
    </interactant>
    <interactant intactId="EBI-9090282">
        <id>P27986-2</id>
        <label>PIK3R1</label>
    </interactant>
    <organismsDiffer>false</organismsDiffer>
    <experiments>3</experiments>
</comment>
<comment type="interaction">
    <interactant intactId="EBI-7877438">
        <id>P42681</id>
    </interactant>
    <interactant intactId="EBI-3957793">
        <id>Q9GZV8</id>
        <label>PRDM14</label>
    </interactant>
    <organismsDiffer>false</organismsDiffer>
    <experiments>3</experiments>
</comment>
<comment type="interaction">
    <interactant intactId="EBI-7877438">
        <id>P42681</id>
    </interactant>
    <interactant intactId="EBI-1210429">
        <id>Q9NYW8</id>
        <label>RBAK</label>
    </interactant>
    <organismsDiffer>false</organismsDiffer>
    <experiments>3</experiments>
</comment>
<comment type="interaction">
    <interactant intactId="EBI-7877438">
        <id>P42681</id>
    </interactant>
    <interactant intactId="EBI-714146">
        <id>O14543</id>
        <label>SOCS3</label>
    </interactant>
    <organismsDiffer>false</organismsDiffer>
    <experiments>3</experiments>
</comment>
<comment type="interaction">
    <interactant intactId="EBI-7877438">
        <id>P42681</id>
    </interactant>
    <interactant intactId="EBI-3929549">
        <id>O14544</id>
        <label>SOCS6</label>
    </interactant>
    <organismsDiffer>false</organismsDiffer>
    <experiments>3</experiments>
</comment>
<comment type="interaction">
    <interactant intactId="EBI-7877438">
        <id>P42681</id>
    </interactant>
    <interactant intactId="EBI-1553984">
        <id>Q9UGK3</id>
        <label>STAP2</label>
    </interactant>
    <organismsDiffer>false</organismsDiffer>
    <experiments>3</experiments>
</comment>
<comment type="interaction">
    <interactant intactId="EBI-7877438">
        <id>P42681</id>
    </interactant>
    <interactant intactId="EBI-7543499">
        <id>Q8IZW8</id>
        <label>TNS4</label>
    </interactant>
    <organismsDiffer>false</organismsDiffer>
    <experiments>3</experiments>
</comment>
<comment type="interaction">
    <interactant intactId="EBI-7877438">
        <id>P42681</id>
    </interactant>
    <interactant intactId="EBI-6427977">
        <id>Q96SQ5</id>
        <label>ZNF587</label>
    </interactant>
    <organismsDiffer>false</organismsDiffer>
    <experiments>3</experiments>
</comment>
<comment type="interaction">
    <interactant intactId="EBI-7877438">
        <id>P42681</id>
    </interactant>
    <interactant intactId="EBI-10240849">
        <id>Q3KQV3</id>
        <label>ZNF792</label>
    </interactant>
    <organismsDiffer>false</organismsDiffer>
    <experiments>3</experiments>
</comment>
<comment type="interaction">
    <interactant intactId="EBI-7877438">
        <id>P42681</id>
    </interactant>
    <interactant intactId="EBI-5667516">
        <id>Q9Y2P0</id>
        <label>ZNF835</label>
    </interactant>
    <organismsDiffer>false</organismsDiffer>
    <experiments>3</experiments>
</comment>
<comment type="subcellular location">
    <subcellularLocation>
        <location evidence="13">Cytoplasm</location>
    </subcellularLocation>
    <subcellularLocation>
        <location evidence="13">Nucleus</location>
    </subcellularLocation>
    <subcellularLocation>
        <location evidence="13">Cell membrane</location>
        <topology evidence="13">Peripheral membrane protein</topology>
    </subcellularLocation>
    <text>Localizes in the vicinity of cell surface receptors in the plasma membrane after receptor stimulation. Translocates into the nucleus and enhances IFN-gamma gene transcription in T-cells.</text>
</comment>
<comment type="tissue specificity">
    <text evidence="9 15">Expressed in T-cells and some myeloid cell lines. Expressed in Th1/Th0 cells with IFN-gamma-producing potential.</text>
</comment>
<comment type="PTM">
    <text evidence="12">Phosphorylated at Tyr-420 by FYN. Autophosphorylation at Tyr-91 is critical for the activation of TXK, leading to the up-regulation of IFN-gamma gene transcription.</text>
</comment>
<comment type="PTM">
    <text evidence="1">The cysteine string at the N-terminus is palmitoylated and required for the proper subcellular location.</text>
</comment>
<comment type="similarity">
    <text evidence="4">Belongs to the protein kinase superfamily. Tyr protein kinase family. TEC subfamily.</text>
</comment>
<comment type="caution">
    <text evidence="17">Unlike the other TEC subfamily members, TXK is activated independently of the activity of phosphatidylinositol 3-kinase, consistent with its lack of a PH domain. Membrane association is performed through palmitoylation at the N-terminus.</text>
</comment>
<evidence type="ECO:0000250" key="1"/>
<evidence type="ECO:0000250" key="2">
    <source>
        <dbReference type="UniProtKB" id="P42682"/>
    </source>
</evidence>
<evidence type="ECO:0000255" key="3"/>
<evidence type="ECO:0000255" key="4">
    <source>
        <dbReference type="PROSITE-ProRule" id="PRU00159"/>
    </source>
</evidence>
<evidence type="ECO:0000255" key="5">
    <source>
        <dbReference type="PROSITE-ProRule" id="PRU00191"/>
    </source>
</evidence>
<evidence type="ECO:0000255" key="6">
    <source>
        <dbReference type="PROSITE-ProRule" id="PRU00192"/>
    </source>
</evidence>
<evidence type="ECO:0000255" key="7">
    <source>
        <dbReference type="PROSITE-ProRule" id="PRU10028"/>
    </source>
</evidence>
<evidence type="ECO:0000256" key="8">
    <source>
        <dbReference type="SAM" id="MobiDB-lite"/>
    </source>
</evidence>
<evidence type="ECO:0000269" key="9">
    <source>
    </source>
</evidence>
<evidence type="ECO:0000269" key="10">
    <source>
    </source>
</evidence>
<evidence type="ECO:0000269" key="11">
    <source>
    </source>
</evidence>
<evidence type="ECO:0000269" key="12">
    <source>
    </source>
</evidence>
<evidence type="ECO:0000269" key="13">
    <source>
    </source>
</evidence>
<evidence type="ECO:0000269" key="14">
    <source>
    </source>
</evidence>
<evidence type="ECO:0000269" key="15">
    <source>
    </source>
</evidence>
<evidence type="ECO:0000269" key="16">
    <source>
    </source>
</evidence>
<evidence type="ECO:0000305" key="17"/>
<evidence type="ECO:0007829" key="18">
    <source>
        <dbReference type="PDB" id="2DM0"/>
    </source>
</evidence>
<proteinExistence type="evidence at protein level"/>
<organism>
    <name type="scientific">Homo sapiens</name>
    <name type="common">Human</name>
    <dbReference type="NCBI Taxonomy" id="9606"/>
    <lineage>
        <taxon>Eukaryota</taxon>
        <taxon>Metazoa</taxon>
        <taxon>Chordata</taxon>
        <taxon>Craniata</taxon>
        <taxon>Vertebrata</taxon>
        <taxon>Euteleostomi</taxon>
        <taxon>Mammalia</taxon>
        <taxon>Eutheria</taxon>
        <taxon>Euarchontoglires</taxon>
        <taxon>Primates</taxon>
        <taxon>Haplorrhini</taxon>
        <taxon>Catarrhini</taxon>
        <taxon>Hominidae</taxon>
        <taxon>Homo</taxon>
    </lineage>
</organism>
<gene>
    <name type="primary">TXK</name>
    <name type="synonym">PTK4</name>
    <name type="synonym">RLK</name>
</gene>
<sequence>MILSSYNTIQSVFCCCCCCSVQKRQMRTQISLSTDEELPEKYTQRRRPWLSQLSNKKQSNTGRVQPSKRKPLPPLPPSEVAEEKIQVKALYDFLPREPCNLALRRAEEYLILEKYNPHWWKARDRLGNEGLIPSNYVTENKITNLEIYEWYHRNITRNQAEHLLRQESKEGAFIVRDSRHLGSYTISVFMGARRSTEAAIKHYQIKKNDSGQWYVAERHAFQSIPELIWYHQHNAAGLMTRLRYPVGLMGSCLPATAGFSYEKWEIDPSELAFIKEIGSGQFGVVHLGEWRSHIQVAIKAINEGSMSEEDFIEEAKVMMKLSHSKLVQLYGVCIQRKPLYIVTEFMENGCLLNYLRENKGKLRKEMLLSVCQDICEGMEYLERNGYIHRDLAARNCLVSSTCIVKISDFGMTRYVLDDEYVSSFGAKFPIKWSPPEVFLFNKYSSKSDVWSFGVLMWEVFTEGKMPFENKSNLQVVEAISEGFRLYRPHLAPMSIYEVMYSCWHEKPEGRPTFAELLRAVTEIAETW</sequence>
<protein>
    <recommendedName>
        <fullName>Tyrosine-protein kinase TXK</fullName>
        <ecNumber evidence="13">2.7.10.2</ecNumber>
    </recommendedName>
    <alternativeName>
        <fullName>Protein-tyrosine kinase 4</fullName>
    </alternativeName>
    <alternativeName>
        <fullName>Resting lymphocyte kinase</fullName>
    </alternativeName>
</protein>
<accession>P42681</accession>
<accession>Q14220</accession>
<name>TXK_HUMAN</name>